<comment type="function">
    <molecule>Capsid protein VP1</molecule>
    <text evidence="2 7">Forms an icosahedral capsid of pseudo T=3 symmetry with capsid proteins VP2 and VP3 (By similarity). The capsid is 300 Angstroms in diameter, composed of 60 copies of each capsid protein and enclosing the viral positive strand RNA genome (By similarity). Capsid protein VP1 mainly forms the vertices of the capsid (By similarity). Capsid protein VP1 interacts with host CXADR to provide virion attachment to target host cells (By similarity). This attachment induces virion internalization (By similarity). Tyrosine kinases are probably involved in the entry process (By similarity). After binding to its receptor, the capsid undergoes conformational changes (By similarity). Capsid protein VP1 N-terminus (that contains an amphipathic alpha-helix) and capsid protein VP4 are externalized (By similarity). Together, they shape a pore in the host membrane through which viral genome is translocated to host cell cytoplasm (By similarity).</text>
</comment>
<comment type="function">
    <molecule>Capsid protein VP2</molecule>
    <text evidence="2">Forms an icosahedral capsid of pseudo T=3 symmetry with capsid proteins VP2 and VP3 (By similarity). The capsid is 300 Angstroms in diameter, composed of 60 copies of each capsid protein and enclosing the viral positive strand RNA genome (By similarity).</text>
</comment>
<comment type="function">
    <molecule>Capsid protein VP3</molecule>
    <text evidence="2">Forms an icosahedral capsid of pseudo T=3 symmetry with capsid proteins VP2 and VP3 (By similarity). The capsid is 300 Angstroms in diameter, composed of 60 copies of each capsid protein and enclosing the viral positive strand RNA genome (By similarity).</text>
</comment>
<comment type="function">
    <molecule>Capsid protein VP4</molecule>
    <text evidence="2">Lies on the inner surface of the capsid shell (By similarity). After binding to the host receptor, the capsid undergoes conformational changes (By similarity). Capsid protein VP4 is released, Capsid protein VP1 N-terminus is externalized, and together, they shape a pore in the host membrane through which the viral genome is translocated into the host cell cytoplasm (By similarity).</text>
</comment>
<comment type="function">
    <molecule>Capsid protein VP0</molecule>
    <text evidence="2">Component of immature procapsids, which is cleaved into capsid proteins VP4 and VP2 after maturation (By similarity). Allows the capsid to remain inactive before the maturation step (By similarity).</text>
</comment>
<comment type="function">
    <molecule>Protease 2A</molecule>
    <text evidence="2 5">Cysteine protease that cleaves viral polyprotein and specific host proteins (By similarity). It is responsible for the autocatalytic cleavage between the P1 and P2 regions, which is the first cleavage occurring in the polyprotein (By similarity). Also cleaves the host translation initiation factor EIF4G1, in order to shut down the capped cellular mRNA translation (By similarity). Inhibits the host nucleus-cytoplasm protein and RNA trafficking by cleaving host members of the nuclear pores (By similarity). Counteracts stress granule formation probably by antagonizing its assembly or promoting its dissassembly (By similarity). Cleaves and inhibits host IFIH1/MDA5, thereby inhibiting the type-I IFN production and the establishment of the antiviral state (By similarity). Cleaves and inhibits host MAVS, thereby inhibiting the type-I IFN production and the establishment of the antiviral state (By similarity).</text>
</comment>
<comment type="function">
    <molecule>Protein 2B</molecule>
    <text evidence="2">Plays an essential role in the virus replication cycle by acting as a viroporin. Creates a pore in the host endoplasmic reticulum and as a consequence releases Ca2+ in the cytoplasm of infected cell. In turn, high levels of cytoplasmic calcium may trigger membrane trafficking and transport of viral ER-associated proteins to viroplasms, sites of viral genome replication.</text>
</comment>
<comment type="function">
    <molecule>Protein 2C</molecule>
    <text evidence="2">Induces and associates with structural rearrangements of intracellular membranes. Displays RNA-binding, nucleotide binding and NTPase activities. May play a role in virion morphogenesis and viral RNA encapsidation by interacting with the capsid protein VP3.</text>
</comment>
<comment type="function">
    <molecule>Protein 3AB</molecule>
    <text evidence="2">Localizes the viral replication complex to the surface of membranous vesicles. Together with protein 3CD binds the Cis-Active RNA Element (CRE) which is involved in RNA synthesis initiation. Acts as a cofactor to stimulate the activity of 3D polymerase, maybe through a nucleid acid chaperone activity.</text>
</comment>
<comment type="function">
    <molecule>Protein 3A</molecule>
    <text evidence="2">Localizes the viral replication complex to the surface of membranous vesicles. It inhibits host cell endoplasmic reticulum-to-Golgi apparatus transport and causes the disassembly of the Golgi complex, possibly through GBF1 interaction (By similarity). This would result in depletion of MHC, trail receptors and IFN receptors at the host cell surface (By similarity). Plays an essential role in viral RNA replication by recruiting ACBD3 and PI4KB at the viral replication sites, thereby allowing the formation of the rearranged membranous structures where viral replication takes place (By similarity).</text>
</comment>
<comment type="function">
    <molecule>Viral protein genome-linked</molecule>
    <text evidence="2">Acts as a primer for viral RNA replication and remains covalently bound to viral genomic RNA. VPg is uridylylated prior to priming replication into VPg-pUpU. The oriI viral genomic sequence may act as a template for this. The VPg-pUpU is then used as primer on the genomic RNA poly(A) by the RNA-dependent RNA polymerase to replicate the viral genome. During genome replication, the VPg-RNA linkage is removed by the host TDP2, thereby accelerating replication. During the late stage of the replication cycle, host TDP2 is excluded from sites of viral RNA synthesis and encapsidation, allowing for the generation of progeny virions.</text>
</comment>
<comment type="function">
    <molecule>Protein 3CD</molecule>
    <text evidence="2">Involved in the viral replication complex and viral polypeptide maturation. It exhibits protease activity with a specificity and catalytic efficiency that is different from protease 3C. Protein 3CD lacks polymerase activity. Protein 3CD binds to the 5'UTR of the viral genome.</text>
</comment>
<comment type="function">
    <molecule>RNA-directed RNA polymerase</molecule>
    <text evidence="2">Replicates the viral genomic RNA on the surface of intracellular membranes. May form linear arrays of subunits that propagate along a strong head-to-tail interaction called interface-I. Covalently attaches UMP to a tyrosine of VPg, which is used to prime RNA synthesis. The positive stranded RNA genome is first replicated at virus induced membranous vesicles, creating a dsRNA genomic replication form. This dsRNA is then used as template to synthesize positive stranded RNA genomes. ss(+)RNA genomes are either translated, replicated or encapsidated.</text>
</comment>
<comment type="function">
    <molecule>Protease 3C</molecule>
    <text evidence="2 4">Major viral protease that mediates proteolytic processing of the polyprotein (By similarity). Cleaves host EIF5B, contributing to host translation shutoff (By similarity). Also cleaves host PABPC1, contributing to host translation shutoff (By similarity). Cleaves host NLRP1, triggers host N-glycine-mediated degradation of the autoinhibitory NLRP1 N-terminal fragment (By similarity).</text>
</comment>
<comment type="catalytic activity">
    <molecule>Protein 2C</molecule>
    <reaction evidence="2">
        <text>a ribonucleoside 5'-triphosphate + H2O = a ribonucleoside 5'-diphosphate + phosphate + H(+)</text>
        <dbReference type="Rhea" id="RHEA:23680"/>
        <dbReference type="ChEBI" id="CHEBI:15377"/>
        <dbReference type="ChEBI" id="CHEBI:15378"/>
        <dbReference type="ChEBI" id="CHEBI:43474"/>
        <dbReference type="ChEBI" id="CHEBI:57930"/>
        <dbReference type="ChEBI" id="CHEBI:61557"/>
        <dbReference type="EC" id="3.6.1.15"/>
    </reaction>
</comment>
<comment type="catalytic activity">
    <molecule>Protease 2A</molecule>
    <reaction evidence="2">
        <text>Selective cleavage of Tyr-|-Gly bond in the picornavirus polyprotein.</text>
        <dbReference type="EC" id="3.4.22.29"/>
    </reaction>
</comment>
<comment type="catalytic activity">
    <molecule>RNA-directed RNA polymerase</molecule>
    <reaction evidence="11">
        <text>RNA(n) + a ribonucleoside 5'-triphosphate = RNA(n+1) + diphosphate</text>
        <dbReference type="Rhea" id="RHEA:21248"/>
        <dbReference type="Rhea" id="RHEA-COMP:14527"/>
        <dbReference type="Rhea" id="RHEA-COMP:17342"/>
        <dbReference type="ChEBI" id="CHEBI:33019"/>
        <dbReference type="ChEBI" id="CHEBI:61557"/>
        <dbReference type="ChEBI" id="CHEBI:140395"/>
        <dbReference type="EC" id="2.7.7.48"/>
    </reaction>
</comment>
<comment type="catalytic activity">
    <molecule>Protease 3C</molecule>
    <reaction evidence="13">
        <text>Selective cleavage of Gln-|-Gly bond in the poliovirus polyprotein. In other picornavirus reactions Glu may be substituted for Gln, and Ser or Thr for Gly.</text>
        <dbReference type="EC" id="3.4.22.28"/>
    </reaction>
</comment>
<comment type="cofactor">
    <molecule>RNA-directed RNA polymerase</molecule>
    <cofactor evidence="2">
        <name>Mg(2+)</name>
        <dbReference type="ChEBI" id="CHEBI:18420"/>
    </cofactor>
    <text evidence="2 5">Binds 2 magnesium ions that constitute a dinuclear catalytic metal center (By similarity). The magnesium ions are not prebound but only present for catalysis (By similarity). Requires the presence of 3CDpro or 3CPro (By similarity).</text>
</comment>
<comment type="activity regulation">
    <molecule>RNA-directed RNA polymerase</molecule>
    <text evidence="2">Replication or transcription is subject to high level of random mutations by the nucleotide analog ribavirin.</text>
</comment>
<comment type="subunit">
    <molecule>Capsid protein VP0</molecule>
    <text evidence="2">Interacts with capsid protein VP1 and capsid protein VP3 to form heterotrimeric protomers.</text>
</comment>
<comment type="subunit">
    <molecule>Capsid protein VP1</molecule>
    <text evidence="2 7">Interacts with capsid protein VP0, and capsid protein VP3 to form heterotrimeric protomers (By similarity). Five protomers subsequently associate to form pentamers which serve as building blocks for the capsid (By similarity). Interacts with capsid protein VP2, capsid protein VP3 and capsid protein VP4 following cleavage of capsid protein VP0 (By similarity). Interacts with host CXADR (By similarity).</text>
</comment>
<comment type="subunit">
    <molecule>Capsid protein VP2</molecule>
    <text evidence="2">Interacts with capsid protein VP1 and capsid protein VP3 in the mature capsid.</text>
</comment>
<comment type="subunit">
    <molecule>Capsid protein VP3</molecule>
    <text evidence="2">Interacts with capsid protein VP0 and capsid protein VP1 to form heterotrimeric protomers (By similarity). Five protomers subsequently associate to form pentamers which serve as building blocks for the capsid (By similarity). Interacts with capsid protein VP4 in the mature capsid (By similarity). Interacts with protein 2C; this interaction may be important for virion morphogenesis (By similarity).</text>
</comment>
<comment type="subunit">
    <molecule>Capsid protein VP4</molecule>
    <text evidence="2">Interacts with capsid protein VP1 and capsid protein VP3.</text>
</comment>
<comment type="subunit">
    <molecule>Protease 2A</molecule>
    <text evidence="6">Homodimer.</text>
</comment>
<comment type="subunit">
    <molecule>Protein 2C</molecule>
    <text evidence="2">Homohexamer; forms a hexameric ring structure with 6-fold symmetry characteristic of AAA+ ATPases (By similarity). Interacts (via N-terminus) with host RTN3 (via reticulon domain); this interaction is important for viral replication (By similarity). Interacts with capsid protein VP3; this interaction may be important for virion morphogenesis (By similarity).</text>
</comment>
<comment type="subunit">
    <molecule>Protein 3AB</molecule>
    <text evidence="2">Interacts with protein 3CD.</text>
</comment>
<comment type="subunit">
    <molecule>Protein 3A</molecule>
    <text evidence="2 5">Homodimer (By similarity). Interacts with host GBF1 (By similarity). Interacts (via GOLD domain) with host ACBD3 (via GOLD domain); this interaction allows the formation of a viral protein 3A/ACBD3 heterotetramer with a 2:2 stoichiometry, which will stimulate the recruitment of host PI4KB in order to synthesize PI4P at the viral RNA replication sites (By similarity).</text>
</comment>
<comment type="subunit">
    <molecule>Viral protein genome-linked</molecule>
    <text evidence="2">Interacts with RNA-directed RNA polymerase.</text>
</comment>
<comment type="subunit">
    <molecule>Protein 3CD</molecule>
    <text evidence="2">Interacts with protein 3AB and with RNA-directed RNA polymerase.</text>
</comment>
<comment type="subunit">
    <molecule>RNA-directed RNA polymerase</molecule>
    <text evidence="2">Interacts with Viral protein genome-linked and with protein 3CD.</text>
</comment>
<comment type="subcellular location">
    <molecule>Capsid protein VP0</molecule>
    <subcellularLocation>
        <location>Virion</location>
    </subcellularLocation>
    <subcellularLocation>
        <location evidence="14">Host cytoplasm</location>
    </subcellularLocation>
</comment>
<comment type="subcellular location">
    <molecule>Capsid protein VP4</molecule>
    <subcellularLocation>
        <location>Virion</location>
    </subcellularLocation>
</comment>
<comment type="subcellular location">
    <molecule>Capsid protein VP2</molecule>
    <subcellularLocation>
        <location evidence="2">Virion</location>
    </subcellularLocation>
    <subcellularLocation>
        <location evidence="14">Host cytoplasm</location>
    </subcellularLocation>
</comment>
<comment type="subcellular location">
    <molecule>Capsid protein VP3</molecule>
    <subcellularLocation>
        <location evidence="2">Virion</location>
    </subcellularLocation>
    <subcellularLocation>
        <location evidence="14">Host cytoplasm</location>
    </subcellularLocation>
</comment>
<comment type="subcellular location">
    <molecule>Capsid protein VP1</molecule>
    <subcellularLocation>
        <location evidence="2">Virion</location>
    </subcellularLocation>
    <subcellularLocation>
        <location evidence="14">Host cytoplasm</location>
    </subcellularLocation>
</comment>
<comment type="subcellular location">
    <molecule>Protein 2B</molecule>
    <subcellularLocation>
        <location evidence="14">Host cytoplasmic vesicle membrane</location>
        <topology evidence="14">Peripheral membrane protein</topology>
        <orientation evidence="14">Cytoplasmic side</orientation>
    </subcellularLocation>
    <text>Probably localizes to the surface of intracellular membrane vesicles that are induced after virus infection as the site for viral RNA replication. These vesicles are derived from the endoplasmic reticulum.</text>
</comment>
<comment type="subcellular location">
    <molecule>Protein 2C</molecule>
    <subcellularLocation>
        <location evidence="14">Host cytoplasmic vesicle membrane</location>
        <topology evidence="14">Peripheral membrane protein</topology>
        <orientation evidence="14">Cytoplasmic side</orientation>
    </subcellularLocation>
    <text>Probably localizes to the surface of intracellular membrane vesicles that are induced after virus infection as the site for viral RNA replication. These vesicles are derived from the endoplasmic reticulum.</text>
</comment>
<comment type="subcellular location">
    <molecule>Protein 3A</molecule>
    <subcellularLocation>
        <location evidence="14">Host cytoplasmic vesicle membrane</location>
        <topology evidence="14">Peripheral membrane protein</topology>
        <orientation evidence="14">Cytoplasmic side</orientation>
    </subcellularLocation>
    <text>Probably localizes to the surface of intracellular membrane vesicles that are induced after virus infection as the site for viral RNA replication. These vesicles are derived from the endoplasmic reticulum.</text>
</comment>
<comment type="subcellular location">
    <molecule>Protein 3AB</molecule>
    <subcellularLocation>
        <location evidence="14">Host cytoplasmic vesicle membrane</location>
        <topology evidence="14">Peripheral membrane protein</topology>
        <orientation evidence="14">Cytoplasmic side</orientation>
    </subcellularLocation>
    <text>Probably localizes to the surface of intracellular membrane vesicles that are induced after virus infection as the site for viral RNA replication. These vesicles are derived from the endoplasmic reticulum.</text>
</comment>
<comment type="subcellular location">
    <molecule>Viral protein genome-linked</molecule>
    <subcellularLocation>
        <location evidence="2">Virion</location>
    </subcellularLocation>
    <subcellularLocation>
        <location evidence="8">Host cytoplasm</location>
    </subcellularLocation>
</comment>
<comment type="subcellular location">
    <molecule>Protease 3C</molecule>
    <subcellularLocation>
        <location>Host cytoplasm</location>
    </subcellularLocation>
</comment>
<comment type="subcellular location">
    <molecule>Protein 3CD</molecule>
    <subcellularLocation>
        <location evidence="2">Host nucleus</location>
    </subcellularLocation>
    <subcellularLocation>
        <location evidence="2">Host cytoplasm</location>
    </subcellularLocation>
    <subcellularLocation>
        <location evidence="14">Host cytoplasmic vesicle membrane</location>
        <topology evidence="14">Peripheral membrane protein</topology>
        <orientation evidence="14">Cytoplasmic side</orientation>
    </subcellularLocation>
    <text>Probably localizes to the surface of intracellular membrane vesicles that are induced after virus infection as the site for viral RNA replication. These vesicles are derived from the endoplasmic reticulum.</text>
</comment>
<comment type="subcellular location">
    <molecule>RNA-directed RNA polymerase</molecule>
    <subcellularLocation>
        <location evidence="14">Host cytoplasmic vesicle membrane</location>
        <topology evidence="14">Peripheral membrane protein</topology>
        <orientation evidence="14">Cytoplasmic side</orientation>
    </subcellularLocation>
    <text>Probably localizes to the surface of intracellular membrane vesicles that are induced after virus infection as the site for viral RNA replication. These vesicles are derived from the endoplasmic reticulum.</text>
</comment>
<comment type="domain">
    <molecule>Protein 2C</molecule>
    <text evidence="1 2">The N-terminus has membrane-binding (By similarity). The N-terminus also displays RNA-binding properties (By similarity). The N-terminus is involved in oligomerization (By similarity). The central part contains an ATPase domain and a degenerate C4-type zinc-finger with only 3 cysteines (By similarity). The C-terminus is involved in RNA-binding (By similarity). The extreme C-terminus contains a region involved in oligomerization (By similarity).</text>
</comment>
<comment type="PTM">
    <molecule>Genome polyprotein</molecule>
    <text evidence="2">Specific enzymatic cleavages in vivo by the viral proteases yield processing intermediates and the mature proteins.</text>
</comment>
<comment type="PTM">
    <molecule>Capsid protein VP0</molecule>
    <text evidence="2">Myristoylation is required for the formation of pentamers during virus assembly. Further assembly of 12 pentamers and a molecule of genomic RNA generates the provirion.</text>
</comment>
<comment type="PTM">
    <molecule>Capsid protein VP0</molecule>
    <text evidence="2">During virion maturation, immature virions are rendered infectious following cleavage of VP0 into VP4 and VP2. This maturation seems to be an autocatalytic event triggered by the presence of RNA in the capsid and it is followed by a conformational change infectious virion.</text>
</comment>
<comment type="PTM">
    <molecule>Capsid protein VP4</molecule>
    <text evidence="2">Myristoylation is required during RNA encapsidation and formation of the mature virus particle.</text>
</comment>
<comment type="PTM">
    <molecule>Viral protein genome-linked</molecule>
    <text evidence="2">VPg is uridylylated by the polymerase into VPg-pUpU. This acts as a nucleotide-peptide primer for the genomic RNA replication.</text>
</comment>
<comment type="similarity">
    <text evidence="14">Belongs to the picornaviruses polyprotein family.</text>
</comment>
<reference key="1">
    <citation type="journal article" date="1994" name="J. Med. Virol.">
        <title>Complete nucleotide sequence of a strain of coxsackie B4 virus of human origin that induces diabetes in mice and its comparison with nondiabetogenic coxsackie B4 JBV strain.</title>
        <authorList>
            <person name="Kang Y."/>
            <person name="Chatterjee N.K."/>
            <person name="Nodwell M.J."/>
            <person name="Yoon J.W."/>
        </authorList>
    </citation>
    <scope>NUCLEOTIDE SEQUENCE [GENOMIC RNA]</scope>
</reference>
<organism>
    <name type="scientific">Coxsackievirus B4 (strain E2)</name>
    <dbReference type="NCBI Taxonomy" id="103905"/>
    <lineage>
        <taxon>Viruses</taxon>
        <taxon>Riboviria</taxon>
        <taxon>Orthornavirae</taxon>
        <taxon>Pisuviricota</taxon>
        <taxon>Pisoniviricetes</taxon>
        <taxon>Picornavirales</taxon>
        <taxon>Picornaviridae</taxon>
        <taxon>Ensavirinae</taxon>
        <taxon>Enterovirus</taxon>
        <taxon>Enterovirus B</taxon>
    </lineage>
</organism>
<dbReference type="EC" id="3.4.22.29" evidence="2"/>
<dbReference type="EC" id="3.6.1.15" evidence="2"/>
<dbReference type="EC" id="3.4.22.28" evidence="13"/>
<dbReference type="EC" id="2.7.7.48" evidence="11"/>
<dbReference type="EMBL" id="S76772">
    <property type="protein sequence ID" value="AAB33885.1"/>
    <property type="molecule type" value="Genomic_RNA"/>
</dbReference>
<dbReference type="EMDB" id="EMD-11165"/>
<dbReference type="EMDB" id="EMD-11300"/>
<dbReference type="SMR" id="Q86887"/>
<dbReference type="MEROPS" id="C03.011"/>
<dbReference type="Proteomes" id="UP000007761">
    <property type="component" value="Genome"/>
</dbReference>
<dbReference type="GO" id="GO:0044162">
    <property type="term" value="C:host cell cytoplasmic vesicle membrane"/>
    <property type="evidence" value="ECO:0007669"/>
    <property type="project" value="UniProtKB-SubCell"/>
</dbReference>
<dbReference type="GO" id="GO:0042025">
    <property type="term" value="C:host cell nucleus"/>
    <property type="evidence" value="ECO:0007669"/>
    <property type="project" value="UniProtKB-SubCell"/>
</dbReference>
<dbReference type="GO" id="GO:0016020">
    <property type="term" value="C:membrane"/>
    <property type="evidence" value="ECO:0007669"/>
    <property type="project" value="UniProtKB-KW"/>
</dbReference>
<dbReference type="GO" id="GO:0039618">
    <property type="term" value="C:T=pseudo3 icosahedral viral capsid"/>
    <property type="evidence" value="ECO:0007669"/>
    <property type="project" value="UniProtKB-KW"/>
</dbReference>
<dbReference type="GO" id="GO:0005524">
    <property type="term" value="F:ATP binding"/>
    <property type="evidence" value="ECO:0007669"/>
    <property type="project" value="UniProtKB-KW"/>
</dbReference>
<dbReference type="GO" id="GO:0016887">
    <property type="term" value="F:ATP hydrolysis activity"/>
    <property type="evidence" value="ECO:0007669"/>
    <property type="project" value="InterPro"/>
</dbReference>
<dbReference type="GO" id="GO:0015267">
    <property type="term" value="F:channel activity"/>
    <property type="evidence" value="ECO:0007669"/>
    <property type="project" value="UniProtKB-KW"/>
</dbReference>
<dbReference type="GO" id="GO:0004197">
    <property type="term" value="F:cysteine-type endopeptidase activity"/>
    <property type="evidence" value="ECO:0007669"/>
    <property type="project" value="UniProtKB-EC"/>
</dbReference>
<dbReference type="GO" id="GO:0003723">
    <property type="term" value="F:RNA binding"/>
    <property type="evidence" value="ECO:0007669"/>
    <property type="project" value="UniProtKB-KW"/>
</dbReference>
<dbReference type="GO" id="GO:0003724">
    <property type="term" value="F:RNA helicase activity"/>
    <property type="evidence" value="ECO:0007669"/>
    <property type="project" value="InterPro"/>
</dbReference>
<dbReference type="GO" id="GO:0003968">
    <property type="term" value="F:RNA-directed RNA polymerase activity"/>
    <property type="evidence" value="ECO:0007669"/>
    <property type="project" value="UniProtKB-KW"/>
</dbReference>
<dbReference type="GO" id="GO:0005198">
    <property type="term" value="F:structural molecule activity"/>
    <property type="evidence" value="ECO:0007669"/>
    <property type="project" value="InterPro"/>
</dbReference>
<dbReference type="GO" id="GO:0008270">
    <property type="term" value="F:zinc ion binding"/>
    <property type="evidence" value="ECO:0007669"/>
    <property type="project" value="UniProtKB-KW"/>
</dbReference>
<dbReference type="GO" id="GO:0006260">
    <property type="term" value="P:DNA replication"/>
    <property type="evidence" value="ECO:0007669"/>
    <property type="project" value="UniProtKB-KW"/>
</dbReference>
<dbReference type="GO" id="GO:0006351">
    <property type="term" value="P:DNA-templated transcription"/>
    <property type="evidence" value="ECO:0007669"/>
    <property type="project" value="InterPro"/>
</dbReference>
<dbReference type="GO" id="GO:0075509">
    <property type="term" value="P:endocytosis involved in viral entry into host cell"/>
    <property type="evidence" value="ECO:0007669"/>
    <property type="project" value="UniProtKB-KW"/>
</dbReference>
<dbReference type="GO" id="GO:0034220">
    <property type="term" value="P:monoatomic ion transmembrane transport"/>
    <property type="evidence" value="ECO:0007669"/>
    <property type="project" value="UniProtKB-KW"/>
</dbReference>
<dbReference type="GO" id="GO:0006508">
    <property type="term" value="P:proteolysis"/>
    <property type="evidence" value="ECO:0007669"/>
    <property type="project" value="UniProtKB-KW"/>
</dbReference>
<dbReference type="GO" id="GO:0044694">
    <property type="term" value="P:symbiont genome entry into host cell via pore formation in plasma membrane"/>
    <property type="evidence" value="ECO:0007669"/>
    <property type="project" value="UniProtKB-KW"/>
</dbReference>
<dbReference type="GO" id="GO:0039520">
    <property type="term" value="P:symbiont-mediated activation of host autophagy"/>
    <property type="evidence" value="ECO:0000250"/>
    <property type="project" value="UniProtKB"/>
</dbReference>
<dbReference type="GO" id="GO:0039540">
    <property type="term" value="P:symbiont-mediated suppression of host cytoplasmic pattern recognition receptor signaling pathway via inhibition of RIG-I activity"/>
    <property type="evidence" value="ECO:0007669"/>
    <property type="project" value="UniProtKB-KW"/>
</dbReference>
<dbReference type="GO" id="GO:0039522">
    <property type="term" value="P:symbiont-mediated suppression of host mRNA export from nucleus"/>
    <property type="evidence" value="ECO:0007669"/>
    <property type="project" value="UniProtKB-KW"/>
</dbReference>
<dbReference type="GO" id="GO:0039694">
    <property type="term" value="P:viral RNA genome replication"/>
    <property type="evidence" value="ECO:0007669"/>
    <property type="project" value="InterPro"/>
</dbReference>
<dbReference type="GO" id="GO:0019062">
    <property type="term" value="P:virion attachment to host cell"/>
    <property type="evidence" value="ECO:0007669"/>
    <property type="project" value="UniProtKB-KW"/>
</dbReference>
<dbReference type="CDD" id="cd23213">
    <property type="entry name" value="Enterovirus_RdRp"/>
    <property type="match status" value="1"/>
</dbReference>
<dbReference type="CDD" id="cd00205">
    <property type="entry name" value="rhv_like"/>
    <property type="match status" value="3"/>
</dbReference>
<dbReference type="FunFam" id="1.20.960.20:FF:000001">
    <property type="entry name" value="Genome polyprotein"/>
    <property type="match status" value="1"/>
</dbReference>
<dbReference type="FunFam" id="2.40.10.10:FF:000018">
    <property type="entry name" value="Genome polyprotein"/>
    <property type="match status" value="1"/>
</dbReference>
<dbReference type="FunFam" id="2.40.10.10:FF:000020">
    <property type="entry name" value="Genome polyprotein"/>
    <property type="match status" value="1"/>
</dbReference>
<dbReference type="FunFam" id="2.40.10.10:FF:000022">
    <property type="entry name" value="Genome polyprotein"/>
    <property type="match status" value="1"/>
</dbReference>
<dbReference type="FunFam" id="2.60.120.20:FF:000001">
    <property type="entry name" value="Genome polyprotein"/>
    <property type="match status" value="1"/>
</dbReference>
<dbReference type="FunFam" id="2.60.120.20:FF:000002">
    <property type="entry name" value="Genome polyprotein"/>
    <property type="match status" value="1"/>
</dbReference>
<dbReference type="FunFam" id="2.60.120.20:FF:000004">
    <property type="entry name" value="Genome polyprotein"/>
    <property type="match status" value="1"/>
</dbReference>
<dbReference type="FunFam" id="3.30.70.270:FF:000008">
    <property type="entry name" value="Genome polyprotein"/>
    <property type="match status" value="1"/>
</dbReference>
<dbReference type="FunFam" id="4.10.80.10:FF:000001">
    <property type="entry name" value="Genome polyprotein"/>
    <property type="match status" value="1"/>
</dbReference>
<dbReference type="FunFam" id="4.10.880.10:FF:000001">
    <property type="entry name" value="Genome polyprotein"/>
    <property type="match status" value="1"/>
</dbReference>
<dbReference type="FunFam" id="4.10.880.10:FF:000002">
    <property type="entry name" value="Genome polyprotein"/>
    <property type="match status" value="1"/>
</dbReference>
<dbReference type="Gene3D" id="1.20.960.20">
    <property type="match status" value="1"/>
</dbReference>
<dbReference type="Gene3D" id="2.60.120.20">
    <property type="match status" value="3"/>
</dbReference>
<dbReference type="Gene3D" id="3.30.70.270">
    <property type="match status" value="1"/>
</dbReference>
<dbReference type="Gene3D" id="4.10.80.10">
    <property type="entry name" value="Picornavirus coat protein VP4"/>
    <property type="match status" value="1"/>
</dbReference>
<dbReference type="Gene3D" id="6.10.20.20">
    <property type="entry name" value="Poliovirus 3A protein-like"/>
    <property type="match status" value="1"/>
</dbReference>
<dbReference type="Gene3D" id="4.10.880.10">
    <property type="entry name" value="Poliovirus 3D polymerase Domain 1 (Nucleotidyltransferase)"/>
    <property type="match status" value="2"/>
</dbReference>
<dbReference type="Gene3D" id="2.40.10.10">
    <property type="entry name" value="Trypsin-like serine proteases"/>
    <property type="match status" value="4"/>
</dbReference>
<dbReference type="InterPro" id="IPR003593">
    <property type="entry name" value="AAA+_ATPase"/>
</dbReference>
<dbReference type="InterPro" id="IPR043502">
    <property type="entry name" value="DNA/RNA_pol_sf"/>
</dbReference>
<dbReference type="InterPro" id="IPR000605">
    <property type="entry name" value="Helicase_SF3_ssDNA/RNA_vir"/>
</dbReference>
<dbReference type="InterPro" id="IPR014759">
    <property type="entry name" value="Helicase_SF3_ssRNA_vir"/>
</dbReference>
<dbReference type="InterPro" id="IPR027417">
    <property type="entry name" value="P-loop_NTPase"/>
</dbReference>
<dbReference type="InterPro" id="IPR014838">
    <property type="entry name" value="P3A"/>
</dbReference>
<dbReference type="InterPro" id="IPR036203">
    <property type="entry name" value="P3A_soluble_dom"/>
</dbReference>
<dbReference type="InterPro" id="IPR044067">
    <property type="entry name" value="PCV_3C_PRO"/>
</dbReference>
<dbReference type="InterPro" id="IPR000081">
    <property type="entry name" value="Peptidase_C3"/>
</dbReference>
<dbReference type="InterPro" id="IPR000199">
    <property type="entry name" value="Peptidase_C3A/C3B_picornavir"/>
</dbReference>
<dbReference type="InterPro" id="IPR009003">
    <property type="entry name" value="Peptidase_S1_PA"/>
</dbReference>
<dbReference type="InterPro" id="IPR043504">
    <property type="entry name" value="Peptidase_S1_PA_chymotrypsin"/>
</dbReference>
<dbReference type="InterPro" id="IPR003138">
    <property type="entry name" value="Pico_P1A"/>
</dbReference>
<dbReference type="InterPro" id="IPR036988">
    <property type="entry name" value="Pico_P1A_sf"/>
</dbReference>
<dbReference type="InterPro" id="IPR002527">
    <property type="entry name" value="Pico_P2B"/>
</dbReference>
<dbReference type="InterPro" id="IPR001676">
    <property type="entry name" value="Picornavirus_capsid"/>
</dbReference>
<dbReference type="InterPro" id="IPR043128">
    <property type="entry name" value="Rev_trsase/Diguanyl_cyclase"/>
</dbReference>
<dbReference type="InterPro" id="IPR033703">
    <property type="entry name" value="Rhv-like"/>
</dbReference>
<dbReference type="InterPro" id="IPR001205">
    <property type="entry name" value="RNA-dir_pol_C"/>
</dbReference>
<dbReference type="InterPro" id="IPR007094">
    <property type="entry name" value="RNA-dir_pol_PSvirus"/>
</dbReference>
<dbReference type="InterPro" id="IPR029053">
    <property type="entry name" value="Viral_coat"/>
</dbReference>
<dbReference type="Pfam" id="PF08727">
    <property type="entry name" value="P3A"/>
    <property type="match status" value="1"/>
</dbReference>
<dbReference type="Pfam" id="PF00548">
    <property type="entry name" value="Peptidase_C3"/>
    <property type="match status" value="1"/>
</dbReference>
<dbReference type="Pfam" id="PF02226">
    <property type="entry name" value="Pico_P1A"/>
    <property type="match status" value="1"/>
</dbReference>
<dbReference type="Pfam" id="PF00947">
    <property type="entry name" value="Pico_P2A"/>
    <property type="match status" value="1"/>
</dbReference>
<dbReference type="Pfam" id="PF01552">
    <property type="entry name" value="Pico_P2B"/>
    <property type="match status" value="1"/>
</dbReference>
<dbReference type="Pfam" id="PF00680">
    <property type="entry name" value="RdRP_1"/>
    <property type="match status" value="1"/>
</dbReference>
<dbReference type="Pfam" id="PF00073">
    <property type="entry name" value="Rhv"/>
    <property type="match status" value="3"/>
</dbReference>
<dbReference type="Pfam" id="PF00910">
    <property type="entry name" value="RNA_helicase"/>
    <property type="match status" value="1"/>
</dbReference>
<dbReference type="SMART" id="SM00382">
    <property type="entry name" value="AAA"/>
    <property type="match status" value="1"/>
</dbReference>
<dbReference type="SUPFAM" id="SSF56672">
    <property type="entry name" value="DNA/RNA polymerases"/>
    <property type="match status" value="1"/>
</dbReference>
<dbReference type="SUPFAM" id="SSF52540">
    <property type="entry name" value="P-loop containing nucleoside triphosphate hydrolases"/>
    <property type="match status" value="1"/>
</dbReference>
<dbReference type="SUPFAM" id="SSF88633">
    <property type="entry name" value="Positive stranded ssRNA viruses"/>
    <property type="match status" value="2"/>
</dbReference>
<dbReference type="SUPFAM" id="SSF89043">
    <property type="entry name" value="Soluble domain of poliovirus core protein 3a"/>
    <property type="match status" value="1"/>
</dbReference>
<dbReference type="SUPFAM" id="SSF50494">
    <property type="entry name" value="Trypsin-like serine proteases"/>
    <property type="match status" value="2"/>
</dbReference>
<dbReference type="PROSITE" id="PS51874">
    <property type="entry name" value="PCV_3C_PRO"/>
    <property type="match status" value="1"/>
</dbReference>
<dbReference type="PROSITE" id="PS50507">
    <property type="entry name" value="RDRP_SSRNA_POS"/>
    <property type="match status" value="1"/>
</dbReference>
<dbReference type="PROSITE" id="PS51218">
    <property type="entry name" value="SF3_HELICASE_2"/>
    <property type="match status" value="1"/>
</dbReference>
<proteinExistence type="inferred from homology"/>
<feature type="initiator methionine" description="Removed; by host" evidence="2">
    <location>
        <position position="1"/>
    </location>
</feature>
<feature type="chain" id="PRO_0000426296" description="Genome polyprotein">
    <location>
        <begin position="2"/>
        <end position="2183"/>
    </location>
</feature>
<feature type="chain" id="PRO_0000426297" description="P1">
    <location>
        <begin position="2"/>
        <end position="849"/>
    </location>
</feature>
<feature type="chain" id="PRO_0000426298" description="Capsid protein VP0">
    <location>
        <begin position="2"/>
        <end position="330"/>
    </location>
</feature>
<feature type="chain" id="PRO_0000426299" description="Capsid protein VP4">
    <location>
        <begin position="2"/>
        <end position="69"/>
    </location>
</feature>
<feature type="chain" id="PRO_0000426300" description="Capsid protein VP2">
    <location>
        <begin position="70"/>
        <end position="330"/>
    </location>
</feature>
<feature type="chain" id="PRO_0000426301" description="Capsid protein VP3">
    <location>
        <begin position="331"/>
        <end position="568"/>
    </location>
</feature>
<feature type="chain" id="PRO_0000426302" description="Capsid protein VP1">
    <location>
        <begin position="569"/>
        <end position="849"/>
    </location>
</feature>
<feature type="chain" id="PRO_0000426303" description="P2">
    <location>
        <begin position="850"/>
        <end position="1427"/>
    </location>
</feature>
<feature type="chain" id="PRO_0000426304" description="Protease 2A">
    <location>
        <begin position="850"/>
        <end position="999"/>
    </location>
</feature>
<feature type="chain" id="PRO_0000039609" description="Protein 2B">
    <location>
        <begin position="1000"/>
        <end position="1098"/>
    </location>
</feature>
<feature type="chain" id="PRO_0000039610" description="Protein 2C">
    <location>
        <begin position="1099"/>
        <end position="1427"/>
    </location>
</feature>
<feature type="chain" id="PRO_0000426305" description="P3">
    <location>
        <begin position="1428"/>
        <end position="2183"/>
    </location>
</feature>
<feature type="chain" id="PRO_0000426306" description="Protein 3AB">
    <location>
        <begin position="1428"/>
        <end position="1538"/>
    </location>
</feature>
<feature type="chain" id="PRO_0000039611" description="Protein 3A">
    <location>
        <begin position="1428"/>
        <end position="1516"/>
    </location>
</feature>
<feature type="chain" id="PRO_0000426307" description="Viral protein genome-linked">
    <location>
        <begin position="1517"/>
        <end position="1538"/>
    </location>
</feature>
<feature type="chain" id="PRO_0000426308" description="Protein 3CD">
    <location>
        <begin position="1539"/>
        <end position="2183"/>
    </location>
</feature>
<feature type="chain" id="PRO_0000426309" description="Protease 3C">
    <location>
        <begin position="1539"/>
        <end position="1721"/>
    </location>
</feature>
<feature type="chain" id="PRO_0000426310" description="RNA-directed RNA polymerase">
    <location>
        <begin position="1722"/>
        <end position="2183"/>
    </location>
</feature>
<feature type="topological domain" description="Cytoplasmic" evidence="10">
    <location>
        <begin position="2"/>
        <end position="1493"/>
    </location>
</feature>
<feature type="intramembrane region" evidence="10">
    <location>
        <begin position="1494"/>
        <end position="1509"/>
    </location>
</feature>
<feature type="topological domain" description="Cytoplasmic" evidence="10">
    <location>
        <begin position="1510"/>
        <end position="2183"/>
    </location>
</feature>
<feature type="domain" description="SF3 helicase" evidence="12">
    <location>
        <begin position="1203"/>
        <end position="1359"/>
    </location>
</feature>
<feature type="domain" description="Peptidase C3" evidence="13">
    <location>
        <begin position="1539"/>
        <end position="1717"/>
    </location>
</feature>
<feature type="domain" description="RdRp catalytic" evidence="11">
    <location>
        <begin position="1948"/>
        <end position="2064"/>
    </location>
</feature>
<feature type="zinc finger region" description="C4-type; degenerate" evidence="1">
    <location>
        <begin position="1367"/>
        <end position="1384"/>
    </location>
</feature>
<feature type="region of interest" description="Amphipathic alpha-helix" evidence="10">
    <location>
        <begin position="566"/>
        <end position="582"/>
    </location>
</feature>
<feature type="region of interest" description="Oligomerization" evidence="2">
    <location>
        <begin position="1099"/>
        <end position="1237"/>
    </location>
</feature>
<feature type="region of interest" description="Membrane-binding" evidence="2">
    <location>
        <begin position="1099"/>
        <end position="1171"/>
    </location>
</feature>
<feature type="region of interest" description="RNA-binding" evidence="2">
    <location>
        <begin position="1120"/>
        <end position="1124"/>
    </location>
</feature>
<feature type="region of interest" description="RNA-binding" evidence="2">
    <location>
        <begin position="1411"/>
        <end position="1418"/>
    </location>
</feature>
<feature type="region of interest" description="Oligomerization" evidence="2">
    <location>
        <begin position="1422"/>
        <end position="1427"/>
    </location>
</feature>
<feature type="active site" description="For protease 2A activity" evidence="2">
    <location>
        <position position="870"/>
    </location>
</feature>
<feature type="active site" description="For protease 2A activity" evidence="2">
    <location>
        <position position="888"/>
    </location>
</feature>
<feature type="active site" description="For protease 2A activity" evidence="2">
    <location>
        <position position="959"/>
    </location>
</feature>
<feature type="active site" description="For protease 3C activity" evidence="13">
    <location>
        <position position="1578"/>
    </location>
</feature>
<feature type="active site" description="For protease 3C activity" evidence="13">
    <location>
        <position position="1609"/>
    </location>
</feature>
<feature type="active site" description="For protease 3C activity" evidence="13">
    <location>
        <position position="1685"/>
    </location>
</feature>
<feature type="binding site" evidence="9">
    <location>
        <position position="905"/>
    </location>
    <ligand>
        <name>Zn(2+)</name>
        <dbReference type="ChEBI" id="CHEBI:29105"/>
        <label>1</label>
        <note>structural</note>
    </ligand>
</feature>
<feature type="binding site" evidence="9">
    <location>
        <position position="907"/>
    </location>
    <ligand>
        <name>Zn(2+)</name>
        <dbReference type="ChEBI" id="CHEBI:29105"/>
        <label>1</label>
        <note>structural</note>
    </ligand>
</feature>
<feature type="binding site" evidence="9">
    <location>
        <position position="965"/>
    </location>
    <ligand>
        <name>Zn(2+)</name>
        <dbReference type="ChEBI" id="CHEBI:29105"/>
        <label>1</label>
        <note>structural</note>
    </ligand>
</feature>
<feature type="binding site" evidence="9">
    <location>
        <position position="967"/>
    </location>
    <ligand>
        <name>Zn(2+)</name>
        <dbReference type="ChEBI" id="CHEBI:29105"/>
        <label>1</label>
        <note>structural</note>
    </ligand>
</feature>
<feature type="binding site" evidence="1">
    <location>
        <position position="1367"/>
    </location>
    <ligand>
        <name>Zn(2+)</name>
        <dbReference type="ChEBI" id="CHEBI:29105"/>
        <label>2</label>
    </ligand>
</feature>
<feature type="binding site" evidence="1">
    <location>
        <position position="1379"/>
    </location>
    <ligand>
        <name>Zn(2+)</name>
        <dbReference type="ChEBI" id="CHEBI:29105"/>
        <label>2</label>
    </ligand>
</feature>
<feature type="binding site" evidence="1">
    <location>
        <position position="1384"/>
    </location>
    <ligand>
        <name>Zn(2+)</name>
        <dbReference type="ChEBI" id="CHEBI:29105"/>
        <label>2</label>
    </ligand>
</feature>
<feature type="binding site" evidence="2">
    <location>
        <position position="1954"/>
    </location>
    <ligand>
        <name>Mg(2+)</name>
        <dbReference type="ChEBI" id="CHEBI:18420"/>
        <label>1</label>
        <note>catalytic; for RdRp activity</note>
    </ligand>
</feature>
<feature type="binding site" evidence="2">
    <location>
        <position position="1954"/>
    </location>
    <ligand>
        <name>Mg(2+)</name>
        <dbReference type="ChEBI" id="CHEBI:18420"/>
        <label>2</label>
        <note>catalytic; for RdRp activity</note>
    </ligand>
</feature>
<feature type="binding site" evidence="2">
    <location>
        <position position="2050"/>
    </location>
    <ligand>
        <name>Mg(2+)</name>
        <dbReference type="ChEBI" id="CHEBI:18420"/>
        <label>1</label>
        <note>catalytic; for RdRp activity</note>
    </ligand>
</feature>
<feature type="binding site" evidence="2">
    <location>
        <position position="2050"/>
    </location>
    <ligand>
        <name>Mg(2+)</name>
        <dbReference type="ChEBI" id="CHEBI:18420"/>
        <label>2</label>
        <note>catalytic; for RdRp activity</note>
    </ligand>
</feature>
<feature type="site" description="Cleavage; by autolysis" evidence="2">
    <location>
        <begin position="69"/>
        <end position="70"/>
    </location>
</feature>
<feature type="site" description="Cleavage; by protease 3C" evidence="3">
    <location>
        <begin position="330"/>
        <end position="331"/>
    </location>
</feature>
<feature type="site" description="Cleavage; by autolysis" evidence="3">
    <location>
        <begin position="849"/>
        <end position="850"/>
    </location>
</feature>
<feature type="site" description="Cleavage; by protease 3C" evidence="3">
    <location>
        <begin position="999"/>
        <end position="1000"/>
    </location>
</feature>
<feature type="site" description="Cleavage; by protease 3C" evidence="3">
    <location>
        <begin position="1098"/>
        <end position="1099"/>
    </location>
</feature>
<feature type="site" description="Involved in the interaction with host RTN3" evidence="8">
    <location>
        <position position="1123"/>
    </location>
</feature>
<feature type="site" description="Cleavage; by protease 3C" evidence="3">
    <location>
        <begin position="1427"/>
        <end position="1428"/>
    </location>
</feature>
<feature type="site" description="Cleavage; by protease 3C" evidence="3">
    <location>
        <begin position="1516"/>
        <end position="1517"/>
    </location>
</feature>
<feature type="site" description="Cleavage; by protease 3C" evidence="3">
    <location>
        <begin position="1538"/>
        <end position="1539"/>
    </location>
</feature>
<feature type="site" description="Cleavage; by protease 3C" evidence="3">
    <location>
        <begin position="1721"/>
        <end position="1722"/>
    </location>
</feature>
<feature type="modified residue" description="O-(5'-phospho-RNA)-tyrosine" evidence="2">
    <location>
        <position position="1519"/>
    </location>
</feature>
<feature type="lipid moiety-binding region" description="N-myristoyl glycine; by host" evidence="2">
    <location>
        <position position="2"/>
    </location>
</feature>
<protein>
    <recommendedName>
        <fullName>Genome polyprotein</fullName>
    </recommendedName>
    <component>
        <recommendedName>
            <fullName>P1</fullName>
        </recommendedName>
    </component>
    <component>
        <recommendedName>
            <fullName>Capsid protein VP0</fullName>
        </recommendedName>
        <alternativeName>
            <fullName>VP4-VP2</fullName>
        </alternativeName>
    </component>
    <component>
        <recommendedName>
            <fullName>Capsid protein VP4</fullName>
        </recommendedName>
        <alternativeName>
            <fullName>P1A</fullName>
        </alternativeName>
        <alternativeName>
            <fullName>Virion protein 4</fullName>
        </alternativeName>
    </component>
    <component>
        <recommendedName>
            <fullName>Capsid protein VP2</fullName>
        </recommendedName>
        <alternativeName>
            <fullName>P1B</fullName>
        </alternativeName>
        <alternativeName>
            <fullName>Virion protein 2</fullName>
        </alternativeName>
    </component>
    <component>
        <recommendedName>
            <fullName>Capsid protein VP3</fullName>
        </recommendedName>
        <alternativeName>
            <fullName>P1C</fullName>
        </alternativeName>
        <alternativeName>
            <fullName>Virion protein 3</fullName>
        </alternativeName>
    </component>
    <component>
        <recommendedName>
            <fullName>Capsid protein VP1</fullName>
        </recommendedName>
        <alternativeName>
            <fullName>P1D</fullName>
        </alternativeName>
        <alternativeName>
            <fullName>Virion protein 1</fullName>
        </alternativeName>
    </component>
    <component>
        <recommendedName>
            <fullName>P2</fullName>
        </recommendedName>
    </component>
    <component>
        <recommendedName>
            <fullName>Protease 2A</fullName>
            <shortName>P2A</shortName>
            <ecNumber evidence="2">3.4.22.29</ecNumber>
        </recommendedName>
        <alternativeName>
            <fullName>Picornain 2A</fullName>
        </alternativeName>
        <alternativeName>
            <fullName>Protein 2A</fullName>
        </alternativeName>
    </component>
    <component>
        <recommendedName>
            <fullName>Protein 2B</fullName>
            <shortName>P2B</shortName>
        </recommendedName>
    </component>
    <component>
        <recommendedName>
            <fullName>Protein 2C</fullName>
            <shortName>P2C</shortName>
            <ecNumber evidence="2">3.6.1.15</ecNumber>
        </recommendedName>
    </component>
    <component>
        <recommendedName>
            <fullName>P3</fullName>
        </recommendedName>
    </component>
    <component>
        <recommendedName>
            <fullName>Protein 3AB</fullName>
        </recommendedName>
    </component>
    <component>
        <recommendedName>
            <fullName>Protein 3A</fullName>
            <shortName>P3A</shortName>
        </recommendedName>
    </component>
    <component>
        <recommendedName>
            <fullName>Viral protein genome-linked</fullName>
            <shortName>VPg</shortName>
        </recommendedName>
        <alternativeName>
            <fullName>Protein 3B</fullName>
            <shortName>P3B</shortName>
        </alternativeName>
    </component>
    <component>
        <recommendedName>
            <fullName>Protein 3CD</fullName>
            <ecNumber>3.4.22.28</ecNumber>
        </recommendedName>
    </component>
    <component>
        <recommendedName>
            <fullName evidence="13">Protease 3C</fullName>
            <ecNumber evidence="13">3.4.22.28</ecNumber>
        </recommendedName>
        <alternativeName>
            <fullName evidence="13">Picornain 3C</fullName>
            <shortName evidence="13">P3C</shortName>
        </alternativeName>
    </component>
    <component>
        <recommendedName>
            <fullName evidence="11">RNA-directed RNA polymerase</fullName>
            <shortName>RdRp</shortName>
            <ecNumber evidence="11">2.7.7.48</ecNumber>
        </recommendedName>
        <alternativeName>
            <fullName>3D polymerase</fullName>
            <shortName>3Dpol</shortName>
        </alternativeName>
        <alternativeName>
            <fullName>Protein 3D</fullName>
            <shortName>3D</shortName>
        </alternativeName>
    </component>
</protein>
<name>POLG_CXB4E</name>
<organismHost>
    <name type="scientific">Homo sapiens</name>
    <name type="common">Human</name>
    <dbReference type="NCBI Taxonomy" id="9606"/>
</organismHost>
<accession>Q86887</accession>
<evidence type="ECO:0000250" key="1">
    <source>
        <dbReference type="UniProtKB" id="B9VUU3"/>
    </source>
</evidence>
<evidence type="ECO:0000250" key="2">
    <source>
        <dbReference type="UniProtKB" id="P03300"/>
    </source>
</evidence>
<evidence type="ECO:0000250" key="3">
    <source>
        <dbReference type="UniProtKB" id="P03301"/>
    </source>
</evidence>
<evidence type="ECO:0000250" key="4">
    <source>
        <dbReference type="UniProtKB" id="P03303"/>
    </source>
</evidence>
<evidence type="ECO:0000250" key="5">
    <source>
        <dbReference type="UniProtKB" id="P03313"/>
    </source>
</evidence>
<evidence type="ECO:0000250" key="6">
    <source>
        <dbReference type="UniProtKB" id="P04936"/>
    </source>
</evidence>
<evidence type="ECO:0000250" key="7">
    <source>
        <dbReference type="UniProtKB" id="P08292"/>
    </source>
</evidence>
<evidence type="ECO:0000250" key="8">
    <source>
        <dbReference type="UniProtKB" id="Q66478"/>
    </source>
</evidence>
<evidence type="ECO:0000250" key="9">
    <source>
        <dbReference type="UniProtKB" id="Q9QF31"/>
    </source>
</evidence>
<evidence type="ECO:0000255" key="10"/>
<evidence type="ECO:0000255" key="11">
    <source>
        <dbReference type="PROSITE-ProRule" id="PRU00539"/>
    </source>
</evidence>
<evidence type="ECO:0000255" key="12">
    <source>
        <dbReference type="PROSITE-ProRule" id="PRU00551"/>
    </source>
</evidence>
<evidence type="ECO:0000255" key="13">
    <source>
        <dbReference type="PROSITE-ProRule" id="PRU01222"/>
    </source>
</evidence>
<evidence type="ECO:0000305" key="14"/>
<sequence>MGAQVSTQKTGAHETSLSATGNSIIHYTNINYYKDAASNSANRQDFTQDPSKFTEPVKDVMIKSLPALNSPTVEECGYSDRVRSITLGNSTITTQECANVVVGYGVWPDYLSDEEATAEDQPTQPDVATCRFYTLKSVKWEMQSAGWWWKFPDALSEMGLFGQNMQYHYLGRSGYTIHVQCNASKFHQGCLLVVCVPEAEMGCTNAENAPTYGDLCGGETAKQFEQNAVTGETAVQTAVCNAGMGVGVGNLTIYPHQWINLRTNNSATIVMPYINSVPMDNMFRHNNFTLMIIPFAPLDYVTGASSYIPITVTVAPMSAEYNGLRLAGHQGLPTMLTPGSTQFLTSDDFQSPSAMPQFDVTPEMNIPGQVRNLMEIAEVDSVVPINNLQANLKTMEAYRVQVRSTDEMGGQIFGFPLQPGASSVLQRTLLGEILNYYTHWSGSLKLTFVFCGSAMATGKFLLAYSPPGAGAPDSRKNAMLGTHVIWDVGLQSSCVLCVPWISQTHYRYVVDDKYTASGFISCWYQTNVIVPAEAQKSCYIMCFVSACNDFSVRMLRDTQFIKQDTFYQGPTEESVERAMGRVADTIARGPSNSEQIPALTAVETGHTSQVDPSDTMQTRHVHNYHSRSESSIENFLCRSACVIYIKYSSAESNNLKRYAEWVINTRQVAQLRRKMEMFTYIRCDMEQTFVITSHQEMSTATNSVVPVQTHQIMYVPPGGPVPTSVNDYVWQTSTNPSIFWTEGNAPPRMSIPFMSIGNAYTMFYDGWSNFSRDGIYGYNSLNNMGTIYARHVNDSSPGGLTSTIRIYFKPKHVKAYVRPPRRLCQYKKAKNVNFDVEAVTTERASLVTTGPHGQQSGAVYVGNYRVVNRHLATHFDWQNYIWEDYNRDLLVSTTTAHGCDTIARCQCTSGVYFCVSRNKHYPVVFEGPGLVEVQESEYYPKRYQSHVLLARGFSEPGDCGGILRCEHGVIGIRTMGREGVVGFADVRDLLWLEDDAMEQGVKDYVEELGNSFGSGFTNQICEQVNLLKESLVGQDSILEKSLKALVKIISALVIVVRNHDDLVTVTATLALIGCTTSPWRWLKRKVSQYYGIPMAERQNNNWLKKFTEMTNACKGMEWIAVKIQKFIEWLKVKILPEVKEKHEFLNRLKQLPLLESQIATIEQSAPSQSDQEQLFSNVQYFAHYCRKYAPLYAAEAKRVFSLEKKMSNYIQFKSKCRIEPVCLLLHGSPGAGKSVATNLIGRSLAEKLNSSVYSLPPDPDHFDGYKQQAVVIMDDLCQNPDGKDVSLFCQMVSSVDFVPPMAALEEKGILFTSPFVLASTNAGSINAPTVSDSRALARRFHFDMNIEVISMYSQNGKINMPMSVKTCDEECCPVNFKKCCPLVCGKAIQFIDRRTQVRYSLDMLVTEMFREYNHRHSVGATLEALFQGPPIYREIRISVAPETPPPPAIADLLRSVDSEAVREYCKEKGWLVPEISSTLQIEKHVSRAFICLQALTTFVSVAGIIYIIYKLFAGFQGAYTGMPNQKPKVPTFRQAKVQGPAFEFAVAMMKRNASTVKTEYGEFTMLGIYDRWAVLPRHAKPGPTILMNDQEVGVVDAKELVDKDGTTLELTLLKLNRNEKFRDIRGFLAREEAEVNEAVLAINTSKFPNMYIPVGQVTEYGFLNLGGTPTKRMLMYNFPTRAGQCGGVLMSTGKVLGIHVGGNGHQGFSASLLRHYFNDEQGEIEFIESSKEAGFPVINTPNKTKLEPSVFHHIFEGNKEPAVLRNGDTRLKVNFEEAIFSKYIGNVNTHVDEYMMEAVDHYAGQLATLDISTEPMRLEDAVYGTEGLEALDLTTSAGYPYVTLGIKKRDILSKKTKDLTKLKECMDKYGLNLPMVTYVKDELRSAEKVAKGKSRLIEASSLNDSVAMRQTFGNLYKTFHLNPGIVTGSAVGCDPDLFWSKIPVMLDGHLRAFDYSGYDASLSPVWFACLKLLLEKLGYSHKETNYIDYLCNSHHLYRDKHYFVRGGMPSGCSGTSIFNSMINNIIIRTLMFKVYKGIDLDQFRMIAYGDDVIASYPLPIDASLLAEAGKGYGLIMTPADKGECFNELTWTNVTFLKRYFRADEQYPFLVHPVMPIKDIHESIRWTKDPKNTQYHVRSLCLLAWHNGEQEYEELYPKIRSVPVGRCLTLPAFSTLRRKWLDAF</sequence>
<keyword id="KW-1072">Activation of host autophagy by virus</keyword>
<keyword id="KW-0067">ATP-binding</keyword>
<keyword id="KW-0167">Capsid protein</keyword>
<keyword id="KW-0191">Covalent protein-RNA linkage</keyword>
<keyword id="KW-0235">DNA replication</keyword>
<keyword id="KW-1262">Eukaryotic host gene expression shutoff by virus</keyword>
<keyword id="KW-1193">Eukaryotic host translation shutoff by virus</keyword>
<keyword id="KW-0347">Helicase</keyword>
<keyword id="KW-1035">Host cytoplasm</keyword>
<keyword id="KW-1036">Host cytoplasmic vesicle</keyword>
<keyword id="KW-1190">Host gene expression shutoff by virus</keyword>
<keyword id="KW-1043">Host membrane</keyword>
<keyword id="KW-1192">Host mRNA suppression by virus</keyword>
<keyword id="KW-1048">Host nucleus</keyword>
<keyword id="KW-0945">Host-virus interaction</keyword>
<keyword id="KW-0378">Hydrolase</keyword>
<keyword id="KW-1090">Inhibition of host innate immune response by virus</keyword>
<keyword id="KW-1099">Inhibition of host mRNA nuclear export by virus</keyword>
<keyword id="KW-1088">Inhibition of host RIG-I by virus</keyword>
<keyword id="KW-1113">Inhibition of host RLR pathway by virus</keyword>
<keyword id="KW-0407">Ion channel</keyword>
<keyword id="KW-0406">Ion transport</keyword>
<keyword id="KW-0449">Lipoprotein</keyword>
<keyword id="KW-0460">Magnesium</keyword>
<keyword id="KW-0472">Membrane</keyword>
<keyword id="KW-0479">Metal-binding</keyword>
<keyword id="KW-0519">Myristate</keyword>
<keyword id="KW-0547">Nucleotide-binding</keyword>
<keyword id="KW-0548">Nucleotidyltransferase</keyword>
<keyword id="KW-0597">Phosphoprotein</keyword>
<keyword id="KW-1172">Pore-mediated penetration of viral genome into host cell</keyword>
<keyword id="KW-0645">Protease</keyword>
<keyword id="KW-0677">Repeat</keyword>
<keyword id="KW-0694">RNA-binding</keyword>
<keyword id="KW-0696">RNA-directed RNA polymerase</keyword>
<keyword id="KW-1143">T=pseudo3 icosahedral capsid protein</keyword>
<keyword id="KW-0788">Thiol protease</keyword>
<keyword id="KW-0808">Transferase</keyword>
<keyword id="KW-0813">Transport</keyword>
<keyword id="KW-1161">Viral attachment to host cell</keyword>
<keyword id="KW-0899">Viral immunoevasion</keyword>
<keyword id="KW-1182">Viral ion channel</keyword>
<keyword id="KW-1162">Viral penetration into host cytoplasm</keyword>
<keyword id="KW-0693">Viral RNA replication</keyword>
<keyword id="KW-0946">Virion</keyword>
<keyword id="KW-1164">Virus endocytosis by host</keyword>
<keyword id="KW-1160">Virus entry into host cell</keyword>
<keyword id="KW-0862">Zinc</keyword>
<keyword id="KW-0863">Zinc-finger</keyword>